<evidence type="ECO:0000255" key="1">
    <source>
        <dbReference type="HAMAP-Rule" id="MF_00160"/>
    </source>
</evidence>
<keyword id="KW-0028">Amino-acid biosynthesis</keyword>
<keyword id="KW-0032">Aminotransferase</keyword>
<keyword id="KW-0963">Cytoplasm</keyword>
<keyword id="KW-0663">Pyridoxal phosphate</keyword>
<keyword id="KW-0664">Pyridoxine biosynthesis</keyword>
<keyword id="KW-0718">Serine biosynthesis</keyword>
<keyword id="KW-0808">Transferase</keyword>
<name>SERC_ACIBC</name>
<feature type="chain" id="PRO_1000097200" description="Phosphoserine aminotransferase">
    <location>
        <begin position="1"/>
        <end position="359"/>
    </location>
</feature>
<feature type="binding site" evidence="1">
    <location>
        <position position="41"/>
    </location>
    <ligand>
        <name>L-glutamate</name>
        <dbReference type="ChEBI" id="CHEBI:29985"/>
    </ligand>
</feature>
<feature type="binding site" evidence="1">
    <location>
        <begin position="75"/>
        <end position="76"/>
    </location>
    <ligand>
        <name>pyridoxal 5'-phosphate</name>
        <dbReference type="ChEBI" id="CHEBI:597326"/>
    </ligand>
</feature>
<feature type="binding site" evidence="1">
    <location>
        <position position="101"/>
    </location>
    <ligand>
        <name>pyridoxal 5'-phosphate</name>
        <dbReference type="ChEBI" id="CHEBI:597326"/>
    </ligand>
</feature>
<feature type="binding site" evidence="1">
    <location>
        <position position="152"/>
    </location>
    <ligand>
        <name>pyridoxal 5'-phosphate</name>
        <dbReference type="ChEBI" id="CHEBI:597326"/>
    </ligand>
</feature>
<feature type="binding site" evidence="1">
    <location>
        <position position="171"/>
    </location>
    <ligand>
        <name>pyridoxal 5'-phosphate</name>
        <dbReference type="ChEBI" id="CHEBI:597326"/>
    </ligand>
</feature>
<feature type="binding site" evidence="1">
    <location>
        <position position="194"/>
    </location>
    <ligand>
        <name>pyridoxal 5'-phosphate</name>
        <dbReference type="ChEBI" id="CHEBI:597326"/>
    </ligand>
</feature>
<feature type="binding site" evidence="1">
    <location>
        <begin position="236"/>
        <end position="237"/>
    </location>
    <ligand>
        <name>pyridoxal 5'-phosphate</name>
        <dbReference type="ChEBI" id="CHEBI:597326"/>
    </ligand>
</feature>
<feature type="modified residue" description="N6-(pyridoxal phosphate)lysine" evidence="1">
    <location>
        <position position="195"/>
    </location>
</feature>
<gene>
    <name evidence="1" type="primary">serC</name>
    <name type="ordered locus">ACICU_02860</name>
</gene>
<proteinExistence type="inferred from homology"/>
<protein>
    <recommendedName>
        <fullName evidence="1">Phosphoserine aminotransferase</fullName>
        <ecNumber evidence="1">2.6.1.52</ecNumber>
    </recommendedName>
    <alternativeName>
        <fullName evidence="1">Phosphohydroxythreonine aminotransferase</fullName>
        <shortName evidence="1">PSAT</shortName>
    </alternativeName>
</protein>
<organism>
    <name type="scientific">Acinetobacter baumannii (strain ACICU)</name>
    <dbReference type="NCBI Taxonomy" id="405416"/>
    <lineage>
        <taxon>Bacteria</taxon>
        <taxon>Pseudomonadati</taxon>
        <taxon>Pseudomonadota</taxon>
        <taxon>Gammaproteobacteria</taxon>
        <taxon>Moraxellales</taxon>
        <taxon>Moraxellaceae</taxon>
        <taxon>Acinetobacter</taxon>
        <taxon>Acinetobacter calcoaceticus/baumannii complex</taxon>
    </lineage>
</organism>
<sequence>MRAYNFCAGPAALPTAVLEKAQQELLDWQGKGLSIMEMSHRSADYVAVAEKAEADLRKLMNIPENYKVLFLQGGASLQFSAIPLNLLGKNNKADYIHTGIWSEKALKEAKRYGDINVVEAGIKVDGKFAISEQSEWNLSDDAAYVHYADNETIGGLQFAGVPDVKAPLVCDFSSSILSAPLDVSKFGLIYAGAQKNIGPAGLTIVIIRDDLLDQAKAEIPSILKYADQAKNGSMVNTPSTYAWYLSGLVFEWLLEQGGVDAIHKVNLEKAQLLYGYIDSSDFYNNPIAIPNRSIMNVPFTLADEALEKQFLKEAEENHLLNLAGHRSVGGMRASIYNAVPLEGVQALIRFMDDFAKRNG</sequence>
<dbReference type="EC" id="2.6.1.52" evidence="1"/>
<dbReference type="EMBL" id="CP000863">
    <property type="protein sequence ID" value="ACC58172.1"/>
    <property type="molecule type" value="Genomic_DNA"/>
</dbReference>
<dbReference type="RefSeq" id="WP_001203182.1">
    <property type="nucleotide sequence ID" value="NZ_CP031380.1"/>
</dbReference>
<dbReference type="SMR" id="B2HWW3"/>
<dbReference type="KEGG" id="abc:ACICU_02860"/>
<dbReference type="HOGENOM" id="CLU_034866_0_2_6"/>
<dbReference type="UniPathway" id="UPA00135">
    <property type="reaction ID" value="UER00197"/>
</dbReference>
<dbReference type="UniPathway" id="UPA00244">
    <property type="reaction ID" value="UER00311"/>
</dbReference>
<dbReference type="Proteomes" id="UP000008839">
    <property type="component" value="Chromosome"/>
</dbReference>
<dbReference type="GO" id="GO:0005737">
    <property type="term" value="C:cytoplasm"/>
    <property type="evidence" value="ECO:0007669"/>
    <property type="project" value="UniProtKB-SubCell"/>
</dbReference>
<dbReference type="GO" id="GO:0004648">
    <property type="term" value="F:O-phospho-L-serine:2-oxoglutarate aminotransferase activity"/>
    <property type="evidence" value="ECO:0007669"/>
    <property type="project" value="UniProtKB-UniRule"/>
</dbReference>
<dbReference type="GO" id="GO:0030170">
    <property type="term" value="F:pyridoxal phosphate binding"/>
    <property type="evidence" value="ECO:0007669"/>
    <property type="project" value="UniProtKB-UniRule"/>
</dbReference>
<dbReference type="GO" id="GO:0006564">
    <property type="term" value="P:L-serine biosynthetic process"/>
    <property type="evidence" value="ECO:0007669"/>
    <property type="project" value="UniProtKB-UniRule"/>
</dbReference>
<dbReference type="GO" id="GO:0008615">
    <property type="term" value="P:pyridoxine biosynthetic process"/>
    <property type="evidence" value="ECO:0007669"/>
    <property type="project" value="UniProtKB-UniRule"/>
</dbReference>
<dbReference type="CDD" id="cd00611">
    <property type="entry name" value="PSAT_like"/>
    <property type="match status" value="1"/>
</dbReference>
<dbReference type="FunFam" id="3.40.640.10:FF:000010">
    <property type="entry name" value="Phosphoserine aminotransferase"/>
    <property type="match status" value="1"/>
</dbReference>
<dbReference type="FunFam" id="3.90.1150.10:FF:000006">
    <property type="entry name" value="Phosphoserine aminotransferase"/>
    <property type="match status" value="1"/>
</dbReference>
<dbReference type="Gene3D" id="3.90.1150.10">
    <property type="entry name" value="Aspartate Aminotransferase, domain 1"/>
    <property type="match status" value="1"/>
</dbReference>
<dbReference type="Gene3D" id="3.40.640.10">
    <property type="entry name" value="Type I PLP-dependent aspartate aminotransferase-like (Major domain)"/>
    <property type="match status" value="1"/>
</dbReference>
<dbReference type="HAMAP" id="MF_00160">
    <property type="entry name" value="SerC_aminotrans_5"/>
    <property type="match status" value="1"/>
</dbReference>
<dbReference type="InterPro" id="IPR000192">
    <property type="entry name" value="Aminotrans_V_dom"/>
</dbReference>
<dbReference type="InterPro" id="IPR020578">
    <property type="entry name" value="Aminotrans_V_PyrdxlP_BS"/>
</dbReference>
<dbReference type="InterPro" id="IPR022278">
    <property type="entry name" value="Pser_aminoTfrase"/>
</dbReference>
<dbReference type="InterPro" id="IPR015424">
    <property type="entry name" value="PyrdxlP-dep_Trfase"/>
</dbReference>
<dbReference type="InterPro" id="IPR015421">
    <property type="entry name" value="PyrdxlP-dep_Trfase_major"/>
</dbReference>
<dbReference type="InterPro" id="IPR015422">
    <property type="entry name" value="PyrdxlP-dep_Trfase_small"/>
</dbReference>
<dbReference type="NCBIfam" id="NF003764">
    <property type="entry name" value="PRK05355.1"/>
    <property type="match status" value="1"/>
</dbReference>
<dbReference type="NCBIfam" id="TIGR01364">
    <property type="entry name" value="serC_1"/>
    <property type="match status" value="1"/>
</dbReference>
<dbReference type="PANTHER" id="PTHR43247">
    <property type="entry name" value="PHOSPHOSERINE AMINOTRANSFERASE"/>
    <property type="match status" value="1"/>
</dbReference>
<dbReference type="PANTHER" id="PTHR43247:SF1">
    <property type="entry name" value="PHOSPHOSERINE AMINOTRANSFERASE"/>
    <property type="match status" value="1"/>
</dbReference>
<dbReference type="Pfam" id="PF00266">
    <property type="entry name" value="Aminotran_5"/>
    <property type="match status" value="1"/>
</dbReference>
<dbReference type="PIRSF" id="PIRSF000525">
    <property type="entry name" value="SerC"/>
    <property type="match status" value="1"/>
</dbReference>
<dbReference type="SUPFAM" id="SSF53383">
    <property type="entry name" value="PLP-dependent transferases"/>
    <property type="match status" value="1"/>
</dbReference>
<dbReference type="PROSITE" id="PS00595">
    <property type="entry name" value="AA_TRANSFER_CLASS_5"/>
    <property type="match status" value="1"/>
</dbReference>
<accession>B2HWW3</accession>
<comment type="function">
    <text evidence="1">Catalyzes the reversible conversion of 3-phosphohydroxypyruvate to phosphoserine and of 3-hydroxy-2-oxo-4-phosphonooxybutanoate to phosphohydroxythreonine.</text>
</comment>
<comment type="catalytic activity">
    <reaction evidence="1">
        <text>O-phospho-L-serine + 2-oxoglutarate = 3-phosphooxypyruvate + L-glutamate</text>
        <dbReference type="Rhea" id="RHEA:14329"/>
        <dbReference type="ChEBI" id="CHEBI:16810"/>
        <dbReference type="ChEBI" id="CHEBI:18110"/>
        <dbReference type="ChEBI" id="CHEBI:29985"/>
        <dbReference type="ChEBI" id="CHEBI:57524"/>
        <dbReference type="EC" id="2.6.1.52"/>
    </reaction>
</comment>
<comment type="catalytic activity">
    <reaction evidence="1">
        <text>4-(phosphooxy)-L-threonine + 2-oxoglutarate = (R)-3-hydroxy-2-oxo-4-phosphooxybutanoate + L-glutamate</text>
        <dbReference type="Rhea" id="RHEA:16573"/>
        <dbReference type="ChEBI" id="CHEBI:16810"/>
        <dbReference type="ChEBI" id="CHEBI:29985"/>
        <dbReference type="ChEBI" id="CHEBI:58452"/>
        <dbReference type="ChEBI" id="CHEBI:58538"/>
        <dbReference type="EC" id="2.6.1.52"/>
    </reaction>
</comment>
<comment type="cofactor">
    <cofactor evidence="1">
        <name>pyridoxal 5'-phosphate</name>
        <dbReference type="ChEBI" id="CHEBI:597326"/>
    </cofactor>
    <text evidence="1">Binds 1 pyridoxal phosphate per subunit.</text>
</comment>
<comment type="pathway">
    <text evidence="1">Amino-acid biosynthesis; L-serine biosynthesis; L-serine from 3-phospho-D-glycerate: step 2/3.</text>
</comment>
<comment type="pathway">
    <text evidence="1">Cofactor biosynthesis; pyridoxine 5'-phosphate biosynthesis; pyridoxine 5'-phosphate from D-erythrose 4-phosphate: step 3/5.</text>
</comment>
<comment type="subunit">
    <text evidence="1">Homodimer.</text>
</comment>
<comment type="subcellular location">
    <subcellularLocation>
        <location evidence="1">Cytoplasm</location>
    </subcellularLocation>
</comment>
<comment type="similarity">
    <text evidence="1">Belongs to the class-V pyridoxal-phosphate-dependent aminotransferase family. SerC subfamily.</text>
</comment>
<reference key="1">
    <citation type="journal article" date="2008" name="Antimicrob. Agents Chemother.">
        <title>Whole-genome pyrosequencing of an epidemic multidrug-resistant Acinetobacter baumannii strain belonging to the European clone II group.</title>
        <authorList>
            <person name="Iacono M."/>
            <person name="Villa L."/>
            <person name="Fortini D."/>
            <person name="Bordoni R."/>
            <person name="Imperi F."/>
            <person name="Bonnal R.J."/>
            <person name="Sicheritz-Ponten T."/>
            <person name="De Bellis G."/>
            <person name="Visca P."/>
            <person name="Cassone A."/>
            <person name="Carattoli A."/>
        </authorList>
    </citation>
    <scope>NUCLEOTIDE SEQUENCE [LARGE SCALE GENOMIC DNA]</scope>
    <source>
        <strain>ACICU</strain>
    </source>
</reference>